<protein>
    <recommendedName>
        <fullName evidence="1">Small ribosomal subunit protein eS4</fullName>
    </recommendedName>
    <alternativeName>
        <fullName evidence="2">30S ribosomal protein S4e</fullName>
    </alternativeName>
</protein>
<feature type="chain" id="PRO_0000130848" description="Small ribosomal subunit protein eS4">
    <location>
        <begin position="1"/>
        <end position="235"/>
    </location>
</feature>
<feature type="domain" description="S4 RNA-binding" evidence="1">
    <location>
        <begin position="37"/>
        <end position="100"/>
    </location>
</feature>
<keyword id="KW-1185">Reference proteome</keyword>
<keyword id="KW-0687">Ribonucleoprotein</keyword>
<keyword id="KW-0689">Ribosomal protein</keyword>
<keyword id="KW-0694">RNA-binding</keyword>
<keyword id="KW-0699">rRNA-binding</keyword>
<sequence length="235" mass="26258">MTHQKRLSVPKSWKVGKKGNKWISTTRPGPHSQARSLPLGIIIRDILKLVDNSREGKRILSEGKVLVDGIPRKDLRFPVGLFDVITLPLVNEAYRMLQDEKGRLTLHKLNETNVNKLCRINNKTTVKGGKFQLNLNDGTNIIGSNEYGTKDSLILSIPDKQVVKHLKFEVGNLAMVVGGQHSGETGKIMEIREVKSSRHNTVMISGETDFETIEDYVIVIGEDKPEIRLGGEISE</sequence>
<evidence type="ECO:0000255" key="1">
    <source>
        <dbReference type="HAMAP-Rule" id="MF_00485"/>
    </source>
</evidence>
<evidence type="ECO:0000305" key="2"/>
<reference key="1">
    <citation type="journal article" date="2002" name="Genome Res.">
        <title>The genome of Methanosarcina acetivorans reveals extensive metabolic and physiological diversity.</title>
        <authorList>
            <person name="Galagan J.E."/>
            <person name="Nusbaum C."/>
            <person name="Roy A."/>
            <person name="Endrizzi M.G."/>
            <person name="Macdonald P."/>
            <person name="FitzHugh W."/>
            <person name="Calvo S."/>
            <person name="Engels R."/>
            <person name="Smirnov S."/>
            <person name="Atnoor D."/>
            <person name="Brown A."/>
            <person name="Allen N."/>
            <person name="Naylor J."/>
            <person name="Stange-Thomann N."/>
            <person name="DeArellano K."/>
            <person name="Johnson R."/>
            <person name="Linton L."/>
            <person name="McEwan P."/>
            <person name="McKernan K."/>
            <person name="Talamas J."/>
            <person name="Tirrell A."/>
            <person name="Ye W."/>
            <person name="Zimmer A."/>
            <person name="Barber R.D."/>
            <person name="Cann I."/>
            <person name="Graham D.E."/>
            <person name="Grahame D.A."/>
            <person name="Guss A.M."/>
            <person name="Hedderich R."/>
            <person name="Ingram-Smith C."/>
            <person name="Kuettner H.C."/>
            <person name="Krzycki J.A."/>
            <person name="Leigh J.A."/>
            <person name="Li W."/>
            <person name="Liu J."/>
            <person name="Mukhopadhyay B."/>
            <person name="Reeve J.N."/>
            <person name="Smith K."/>
            <person name="Springer T.A."/>
            <person name="Umayam L.A."/>
            <person name="White O."/>
            <person name="White R.H."/>
            <person name="de Macario E.C."/>
            <person name="Ferry J.G."/>
            <person name="Jarrell K.F."/>
            <person name="Jing H."/>
            <person name="Macario A.J.L."/>
            <person name="Paulsen I.T."/>
            <person name="Pritchett M."/>
            <person name="Sowers K.R."/>
            <person name="Swanson R.V."/>
            <person name="Zinder S.H."/>
            <person name="Lander E."/>
            <person name="Metcalf W.W."/>
            <person name="Birren B."/>
        </authorList>
    </citation>
    <scope>NUCLEOTIDE SEQUENCE [LARGE SCALE GENOMIC DNA]</scope>
    <source>
        <strain>ATCC 35395 / DSM 2834 / JCM 12185 / C2A</strain>
    </source>
</reference>
<accession>Q8TRT5</accession>
<proteinExistence type="inferred from homology"/>
<organism>
    <name type="scientific">Methanosarcina acetivorans (strain ATCC 35395 / DSM 2834 / JCM 12185 / C2A)</name>
    <dbReference type="NCBI Taxonomy" id="188937"/>
    <lineage>
        <taxon>Archaea</taxon>
        <taxon>Methanobacteriati</taxon>
        <taxon>Methanobacteriota</taxon>
        <taxon>Stenosarchaea group</taxon>
        <taxon>Methanomicrobia</taxon>
        <taxon>Methanosarcinales</taxon>
        <taxon>Methanosarcinaceae</taxon>
        <taxon>Methanosarcina</taxon>
    </lineage>
</organism>
<name>RS4E_METAC</name>
<comment type="similarity">
    <text evidence="1">Belongs to the eukaryotic ribosomal protein eS4 family.</text>
</comment>
<dbReference type="EMBL" id="AE010299">
    <property type="protein sequence ID" value="AAM04509.1"/>
    <property type="molecule type" value="Genomic_DNA"/>
</dbReference>
<dbReference type="RefSeq" id="WP_011021113.1">
    <property type="nucleotide sequence ID" value="NC_003552.1"/>
</dbReference>
<dbReference type="SMR" id="Q8TRT5"/>
<dbReference type="FunCoup" id="Q8TRT5">
    <property type="interactions" value="152"/>
</dbReference>
<dbReference type="STRING" id="188937.MA_1084"/>
<dbReference type="EnsemblBacteria" id="AAM04509">
    <property type="protein sequence ID" value="AAM04509"/>
    <property type="gene ID" value="MA_1084"/>
</dbReference>
<dbReference type="GeneID" id="1472974"/>
<dbReference type="KEGG" id="mac:MA_1084"/>
<dbReference type="HOGENOM" id="CLU_060400_0_0_2"/>
<dbReference type="InParanoid" id="Q8TRT5"/>
<dbReference type="OrthoDB" id="372073at2157"/>
<dbReference type="PhylomeDB" id="Q8TRT5"/>
<dbReference type="Proteomes" id="UP000002487">
    <property type="component" value="Chromosome"/>
</dbReference>
<dbReference type="GO" id="GO:0022627">
    <property type="term" value="C:cytosolic small ribosomal subunit"/>
    <property type="evidence" value="ECO:0000318"/>
    <property type="project" value="GO_Central"/>
</dbReference>
<dbReference type="GO" id="GO:0003723">
    <property type="term" value="F:RNA binding"/>
    <property type="evidence" value="ECO:0000318"/>
    <property type="project" value="GO_Central"/>
</dbReference>
<dbReference type="GO" id="GO:0019843">
    <property type="term" value="F:rRNA binding"/>
    <property type="evidence" value="ECO:0007669"/>
    <property type="project" value="UniProtKB-KW"/>
</dbReference>
<dbReference type="GO" id="GO:0003735">
    <property type="term" value="F:structural constituent of ribosome"/>
    <property type="evidence" value="ECO:0000318"/>
    <property type="project" value="GO_Central"/>
</dbReference>
<dbReference type="GO" id="GO:0006412">
    <property type="term" value="P:translation"/>
    <property type="evidence" value="ECO:0000318"/>
    <property type="project" value="GO_Central"/>
</dbReference>
<dbReference type="CDD" id="cd06087">
    <property type="entry name" value="KOW_RPS4"/>
    <property type="match status" value="1"/>
</dbReference>
<dbReference type="CDD" id="cd00165">
    <property type="entry name" value="S4"/>
    <property type="match status" value="1"/>
</dbReference>
<dbReference type="FunFam" id="3.10.290.10:FF:000002">
    <property type="entry name" value="40S ribosomal protein S4"/>
    <property type="match status" value="1"/>
</dbReference>
<dbReference type="Gene3D" id="2.30.30.30">
    <property type="match status" value="1"/>
</dbReference>
<dbReference type="Gene3D" id="2.40.50.740">
    <property type="match status" value="1"/>
</dbReference>
<dbReference type="Gene3D" id="3.10.290.10">
    <property type="entry name" value="RNA-binding S4 domain"/>
    <property type="match status" value="1"/>
</dbReference>
<dbReference type="HAMAP" id="MF_00485">
    <property type="entry name" value="Ribosomal_eS4"/>
    <property type="match status" value="1"/>
</dbReference>
<dbReference type="InterPro" id="IPR005824">
    <property type="entry name" value="KOW"/>
</dbReference>
<dbReference type="InterPro" id="IPR014722">
    <property type="entry name" value="Rib_uL2_dom2"/>
</dbReference>
<dbReference type="InterPro" id="IPR000876">
    <property type="entry name" value="Ribosomal_eS4"/>
</dbReference>
<dbReference type="InterPro" id="IPR013845">
    <property type="entry name" value="Ribosomal_eS4_central_region"/>
</dbReference>
<dbReference type="InterPro" id="IPR038237">
    <property type="entry name" value="Ribosomal_eS4_central_sf"/>
</dbReference>
<dbReference type="InterPro" id="IPR041982">
    <property type="entry name" value="Ribosomal_eS4_KOW"/>
</dbReference>
<dbReference type="InterPro" id="IPR013843">
    <property type="entry name" value="Ribosomal_eS4_N"/>
</dbReference>
<dbReference type="InterPro" id="IPR018199">
    <property type="entry name" value="Ribosomal_eS4_N_CS"/>
</dbReference>
<dbReference type="InterPro" id="IPR036986">
    <property type="entry name" value="S4_RNA-bd_sf"/>
</dbReference>
<dbReference type="NCBIfam" id="NF003312">
    <property type="entry name" value="PRK04313.1"/>
    <property type="match status" value="1"/>
</dbReference>
<dbReference type="PANTHER" id="PTHR11581">
    <property type="entry name" value="30S/40S RIBOSOMAL PROTEIN S4"/>
    <property type="match status" value="1"/>
</dbReference>
<dbReference type="PANTHER" id="PTHR11581:SF0">
    <property type="entry name" value="SMALL RIBOSOMAL SUBUNIT PROTEIN ES4"/>
    <property type="match status" value="1"/>
</dbReference>
<dbReference type="Pfam" id="PF00900">
    <property type="entry name" value="Ribosomal_S4e"/>
    <property type="match status" value="1"/>
</dbReference>
<dbReference type="Pfam" id="PF08071">
    <property type="entry name" value="RS4NT"/>
    <property type="match status" value="1"/>
</dbReference>
<dbReference type="PIRSF" id="PIRSF002116">
    <property type="entry name" value="Ribosomal_S4"/>
    <property type="match status" value="1"/>
</dbReference>
<dbReference type="SMART" id="SM00739">
    <property type="entry name" value="KOW"/>
    <property type="match status" value="1"/>
</dbReference>
<dbReference type="SUPFAM" id="SSF55174">
    <property type="entry name" value="Alpha-L RNA-binding motif"/>
    <property type="match status" value="1"/>
</dbReference>
<dbReference type="PROSITE" id="PS00528">
    <property type="entry name" value="RIBOSOMAL_S4E"/>
    <property type="match status" value="1"/>
</dbReference>
<dbReference type="PROSITE" id="PS50889">
    <property type="entry name" value="S4"/>
    <property type="match status" value="1"/>
</dbReference>
<gene>
    <name evidence="1" type="primary">rps4e</name>
    <name type="ordered locus">MA_1084</name>
</gene>